<sequence>MNKWLCCALLVLLDIIEWTTQETLPPKYLHYDPETGHQLLCDKCAPGTYLKQHCTVRRKTLCVPCPDHSYTDSWHTSDECVYCSPVCKELQSVKQECNRTHNRVCECEEGRYLEIEFCLKHRSCPPGSGVVQAGTPERNTVCKKCPDGFFSGETSSKAPCIKHTNCSTFGLLLIQKGNATHDNVCSGNREATQKCGIDVTLCEEAFFRFAVPTKIIPNWLSVLVDSLPGTKVNAESVERIKRRHSSQEQTFQLLKLWKHQNRDQEMVKKIIQDIDLCESSVQRHLGHSNLTTEQLLALMESLPGKKISPEEIERTRKTCKSSEQLLKLLSLWRIKNGDQDTLKGLMYALKHLKTSHFPKTVTHSLRKTMRFLHSFTMYRLYQKLFLEMIGNQVQSVKISCL</sequence>
<comment type="function">
    <text evidence="5">Acts as a decoy receptor for TNFSF11/RANKL and thereby neutralizes its function in osteoclastogenesis. Inhibits the activation of osteoclasts and promotes osteoclast apoptosis in vitro. Bone homeostasis seems to depend on the local ratio between TNFSF11 and TNFRSF11B. May also play a role in preventing arterial calcification. May act as decoy receptor for TNFSF10/TRAIL and protect against apoptosis. TNFSF10/TRAIL binding blocks the inhibition of osteoclastogenesis.</text>
</comment>
<comment type="subunit">
    <text evidence="6">Homodimer. Interacts with TNFSF10 and TNFSF11.</text>
</comment>
<comment type="interaction">
    <interactant intactId="EBI-16015871">
        <id>O08712</id>
    </interactant>
    <interactant intactId="EBI-15890886">
        <id>O35235-1</id>
        <label>Tnfsf11</label>
    </interactant>
    <organismsDiffer>false</organismsDiffer>
    <experiments>4</experiments>
</comment>
<comment type="subcellular location">
    <subcellularLocation>
        <location>Secreted</location>
    </subcellularLocation>
</comment>
<comment type="tissue specificity">
    <text>Highly expressed in liver, lung, stomach, intestines and calvaria. Highly expressed in decidua and placenta, and in embryo.</text>
</comment>
<comment type="developmental stage">
    <text>Detected in embryo at high levels on day 7, whereas expression decreases at day 11 and increases from day 15 to 17. On day 15 found in developing bone primordia, brachiocephalic artery and ductus arteriosus, left main bronchus, abdominal aorta and midgut.</text>
</comment>
<comment type="induction">
    <text>Up-regulated by TGF-beta and estrogens. Down-regulated by 1,25-dihdroxyvitamin D3 and parathyroid hormone.</text>
</comment>
<evidence type="ECO:0000250" key="1"/>
<evidence type="ECO:0000255" key="2"/>
<evidence type="ECO:0000255" key="3">
    <source>
        <dbReference type="PROSITE-ProRule" id="PRU00064"/>
    </source>
</evidence>
<evidence type="ECO:0000255" key="4">
    <source>
        <dbReference type="PROSITE-ProRule" id="PRU00206"/>
    </source>
</evidence>
<evidence type="ECO:0000269" key="5">
    <source>
    </source>
</evidence>
<evidence type="ECO:0000269" key="6">
    <source>
    </source>
</evidence>
<evidence type="ECO:0000269" key="7">
    <source>
    </source>
</evidence>
<evidence type="ECO:0007829" key="8">
    <source>
        <dbReference type="PDB" id="4E4D"/>
    </source>
</evidence>
<organism>
    <name type="scientific">Mus musculus</name>
    <name type="common">Mouse</name>
    <dbReference type="NCBI Taxonomy" id="10090"/>
    <lineage>
        <taxon>Eukaryota</taxon>
        <taxon>Metazoa</taxon>
        <taxon>Chordata</taxon>
        <taxon>Craniata</taxon>
        <taxon>Vertebrata</taxon>
        <taxon>Euteleostomi</taxon>
        <taxon>Mammalia</taxon>
        <taxon>Eutheria</taxon>
        <taxon>Euarchontoglires</taxon>
        <taxon>Glires</taxon>
        <taxon>Rodentia</taxon>
        <taxon>Myomorpha</taxon>
        <taxon>Muroidea</taxon>
        <taxon>Muridae</taxon>
        <taxon>Murinae</taxon>
        <taxon>Mus</taxon>
        <taxon>Mus</taxon>
    </lineage>
</organism>
<accession>O08712</accession>
<accession>O70202</accession>
<dbReference type="EMBL" id="U94331">
    <property type="protein sequence ID" value="AAB53708.1"/>
    <property type="molecule type" value="mRNA"/>
</dbReference>
<dbReference type="EMBL" id="AB013898">
    <property type="protein sequence ID" value="BAA28269.1"/>
    <property type="molecule type" value="mRNA"/>
</dbReference>
<dbReference type="EMBL" id="AB013903">
    <property type="protein sequence ID" value="BAA33388.1"/>
    <property type="molecule type" value="Genomic_DNA"/>
</dbReference>
<dbReference type="CCDS" id="CCDS27468.1"/>
<dbReference type="RefSeq" id="NP_032790.3">
    <property type="nucleotide sequence ID" value="NM_008764.3"/>
</dbReference>
<dbReference type="PDB" id="4E4D">
    <property type="method" value="X-ray"/>
    <property type="resolution" value="2.70 A"/>
    <property type="chains" value="R=22-197"/>
</dbReference>
<dbReference type="PDBsum" id="4E4D"/>
<dbReference type="SMR" id="O08712"/>
<dbReference type="ComplexPortal" id="CPX-4763">
    <property type="entry name" value="Osteoprotegerin complex"/>
</dbReference>
<dbReference type="DIP" id="DIP-59980N"/>
<dbReference type="FunCoup" id="O08712">
    <property type="interactions" value="445"/>
</dbReference>
<dbReference type="IntAct" id="O08712">
    <property type="interactions" value="1"/>
</dbReference>
<dbReference type="STRING" id="10090.ENSMUSP00000078705"/>
<dbReference type="GlyCosmos" id="O08712">
    <property type="glycosylation" value="4 sites, No reported glycans"/>
</dbReference>
<dbReference type="GlyGen" id="O08712">
    <property type="glycosylation" value="4 sites, 2 N-linked glycans (2 sites)"/>
</dbReference>
<dbReference type="PhosphoSitePlus" id="O08712"/>
<dbReference type="jPOST" id="O08712"/>
<dbReference type="PaxDb" id="10090-ENSMUSP00000078705"/>
<dbReference type="ProteomicsDB" id="258833"/>
<dbReference type="Antibodypedia" id="13632">
    <property type="antibodies" value="798 antibodies from 45 providers"/>
</dbReference>
<dbReference type="DNASU" id="18383"/>
<dbReference type="Ensembl" id="ENSMUST00000079772.4">
    <property type="protein sequence ID" value="ENSMUSP00000078705.4"/>
    <property type="gene ID" value="ENSMUSG00000063727.4"/>
</dbReference>
<dbReference type="GeneID" id="18383"/>
<dbReference type="KEGG" id="mmu:18383"/>
<dbReference type="UCSC" id="uc007vrk.1">
    <property type="organism name" value="mouse"/>
</dbReference>
<dbReference type="AGR" id="MGI:109587"/>
<dbReference type="CTD" id="4982"/>
<dbReference type="MGI" id="MGI:109587">
    <property type="gene designation" value="Tnfrsf11b"/>
</dbReference>
<dbReference type="VEuPathDB" id="HostDB:ENSMUSG00000063727"/>
<dbReference type="eggNOG" id="ENOG502QVRT">
    <property type="taxonomic scope" value="Eukaryota"/>
</dbReference>
<dbReference type="GeneTree" id="ENSGT00940000155167"/>
<dbReference type="HOGENOM" id="CLU_057708_0_0_1"/>
<dbReference type="InParanoid" id="O08712"/>
<dbReference type="OMA" id="TICKRCP"/>
<dbReference type="OrthoDB" id="8710478at2759"/>
<dbReference type="PhylomeDB" id="O08712"/>
<dbReference type="TreeFam" id="TF331157"/>
<dbReference type="Reactome" id="R-MMU-5669034">
    <property type="pathway name" value="TNFs bind their physiological receptors"/>
</dbReference>
<dbReference type="BioGRID-ORCS" id="18383">
    <property type="hits" value="2 hits in 77 CRISPR screens"/>
</dbReference>
<dbReference type="ChiTaRS" id="Tnfrsf11b">
    <property type="organism name" value="mouse"/>
</dbReference>
<dbReference type="EvolutionaryTrace" id="O08712"/>
<dbReference type="PRO" id="PR:O08712"/>
<dbReference type="Proteomes" id="UP000000589">
    <property type="component" value="Chromosome 15"/>
</dbReference>
<dbReference type="RNAct" id="O08712">
    <property type="molecule type" value="protein"/>
</dbReference>
<dbReference type="Bgee" id="ENSMUSG00000063727">
    <property type="expression patterns" value="Expressed in decidua and 160 other cell types or tissues"/>
</dbReference>
<dbReference type="ExpressionAtlas" id="O08712">
    <property type="expression patterns" value="baseline and differential"/>
</dbReference>
<dbReference type="GO" id="GO:0031012">
    <property type="term" value="C:extracellular matrix"/>
    <property type="evidence" value="ECO:0000314"/>
    <property type="project" value="MGI"/>
</dbReference>
<dbReference type="GO" id="GO:0005576">
    <property type="term" value="C:extracellular region"/>
    <property type="evidence" value="ECO:0000303"/>
    <property type="project" value="ComplexPortal"/>
</dbReference>
<dbReference type="GO" id="GO:0005615">
    <property type="term" value="C:extracellular space"/>
    <property type="evidence" value="ECO:0007005"/>
    <property type="project" value="BHF-UCL"/>
</dbReference>
<dbReference type="GO" id="GO:0043235">
    <property type="term" value="C:receptor complex"/>
    <property type="evidence" value="ECO:0000266"/>
    <property type="project" value="ComplexPortal"/>
</dbReference>
<dbReference type="GO" id="GO:1904399">
    <property type="term" value="F:heparan sulfate binding"/>
    <property type="evidence" value="ECO:0000314"/>
    <property type="project" value="MGI"/>
</dbReference>
<dbReference type="GO" id="GO:0006915">
    <property type="term" value="P:apoptotic process"/>
    <property type="evidence" value="ECO:0007669"/>
    <property type="project" value="UniProtKB-KW"/>
</dbReference>
<dbReference type="GO" id="GO:0030198">
    <property type="term" value="P:extracellular matrix organization"/>
    <property type="evidence" value="ECO:0000314"/>
    <property type="project" value="MGI"/>
</dbReference>
<dbReference type="GO" id="GO:0042489">
    <property type="term" value="P:negative regulation of odontogenesis of dentin-containing tooth"/>
    <property type="evidence" value="ECO:0000314"/>
    <property type="project" value="MGI"/>
</dbReference>
<dbReference type="GO" id="GO:0045671">
    <property type="term" value="P:negative regulation of osteoclast differentiation"/>
    <property type="evidence" value="ECO:0000314"/>
    <property type="project" value="MGI"/>
</dbReference>
<dbReference type="GO" id="GO:0010804">
    <property type="term" value="P:negative regulation of tumor necrosis factor-mediated signaling pathway"/>
    <property type="evidence" value="ECO:0000314"/>
    <property type="project" value="MGI"/>
</dbReference>
<dbReference type="GO" id="GO:0007165">
    <property type="term" value="P:signal transduction"/>
    <property type="evidence" value="ECO:0007669"/>
    <property type="project" value="InterPro"/>
</dbReference>
<dbReference type="CDD" id="cd01670">
    <property type="entry name" value="Death"/>
    <property type="match status" value="1"/>
</dbReference>
<dbReference type="CDD" id="cd00185">
    <property type="entry name" value="TNFRSF"/>
    <property type="match status" value="1"/>
</dbReference>
<dbReference type="CDD" id="cd10581">
    <property type="entry name" value="TNFRSF11B"/>
    <property type="match status" value="1"/>
</dbReference>
<dbReference type="FunFam" id="1.10.533.10:FF:000066">
    <property type="entry name" value="Tumor necrosis factor receptor superfamily member 11B"/>
    <property type="match status" value="1"/>
</dbReference>
<dbReference type="FunFam" id="2.10.50.10:FF:000014">
    <property type="entry name" value="Tumor necrosis factor receptor superfamily member 11B"/>
    <property type="match status" value="1"/>
</dbReference>
<dbReference type="FunFam" id="2.10.50.10:FF:000030">
    <property type="entry name" value="Tumor necrosis factor receptor superfamily member 11B"/>
    <property type="match status" value="1"/>
</dbReference>
<dbReference type="Gene3D" id="1.10.533.10">
    <property type="entry name" value="Death Domain, Fas"/>
    <property type="match status" value="1"/>
</dbReference>
<dbReference type="Gene3D" id="2.10.50.10">
    <property type="entry name" value="Tumor Necrosis Factor Receptor, subunit A, domain 2"/>
    <property type="match status" value="3"/>
</dbReference>
<dbReference type="InterPro" id="IPR011029">
    <property type="entry name" value="DEATH-like_dom_sf"/>
</dbReference>
<dbReference type="InterPro" id="IPR000488">
    <property type="entry name" value="Death_dom"/>
</dbReference>
<dbReference type="InterPro" id="IPR001368">
    <property type="entry name" value="TNFR/NGFR_Cys_rich_reg"/>
</dbReference>
<dbReference type="InterPro" id="IPR022323">
    <property type="entry name" value="TNFR_11"/>
</dbReference>
<dbReference type="InterPro" id="IPR017371">
    <property type="entry name" value="TNFR_11B"/>
</dbReference>
<dbReference type="InterPro" id="IPR052459">
    <property type="entry name" value="TNFRSF_decoy_receptor"/>
</dbReference>
<dbReference type="PANTHER" id="PTHR23097">
    <property type="entry name" value="TUMOR NECROSIS FACTOR RECEPTOR SUPERFAMILY MEMBER"/>
    <property type="match status" value="1"/>
</dbReference>
<dbReference type="PANTHER" id="PTHR23097:SF90">
    <property type="entry name" value="TUMOR NECROSIS FACTOR RECEPTOR SUPERFAMILY MEMBER 11B"/>
    <property type="match status" value="1"/>
</dbReference>
<dbReference type="Pfam" id="PF23630">
    <property type="entry name" value="Death_TNFRSF11B"/>
    <property type="match status" value="2"/>
</dbReference>
<dbReference type="Pfam" id="PF00020">
    <property type="entry name" value="TNFR_c6"/>
    <property type="match status" value="3"/>
</dbReference>
<dbReference type="PIRSF" id="PIRSF038065">
    <property type="entry name" value="TNFR_11B"/>
    <property type="match status" value="1"/>
</dbReference>
<dbReference type="PRINTS" id="PR01961">
    <property type="entry name" value="TNFACTORR11"/>
</dbReference>
<dbReference type="PRINTS" id="PR01975">
    <property type="entry name" value="TNFACTORR11B"/>
</dbReference>
<dbReference type="SMART" id="SM00005">
    <property type="entry name" value="DEATH"/>
    <property type="match status" value="1"/>
</dbReference>
<dbReference type="SMART" id="SM01411">
    <property type="entry name" value="Ephrin_rec_like"/>
    <property type="match status" value="2"/>
</dbReference>
<dbReference type="SMART" id="SM00208">
    <property type="entry name" value="TNFR"/>
    <property type="match status" value="4"/>
</dbReference>
<dbReference type="SUPFAM" id="SSF47986">
    <property type="entry name" value="DEATH domain"/>
    <property type="match status" value="2"/>
</dbReference>
<dbReference type="SUPFAM" id="SSF57586">
    <property type="entry name" value="TNF receptor-like"/>
    <property type="match status" value="2"/>
</dbReference>
<dbReference type="PROSITE" id="PS50017">
    <property type="entry name" value="DEATH_DOMAIN"/>
    <property type="match status" value="1"/>
</dbReference>
<dbReference type="PROSITE" id="PS00652">
    <property type="entry name" value="TNFR_NGFR_1"/>
    <property type="match status" value="1"/>
</dbReference>
<dbReference type="PROSITE" id="PS50050">
    <property type="entry name" value="TNFR_NGFR_2"/>
    <property type="match status" value="2"/>
</dbReference>
<keyword id="KW-0002">3D-structure</keyword>
<keyword id="KW-0053">Apoptosis</keyword>
<keyword id="KW-1015">Disulfide bond</keyword>
<keyword id="KW-0325">Glycoprotein</keyword>
<keyword id="KW-0675">Receptor</keyword>
<keyword id="KW-1185">Reference proteome</keyword>
<keyword id="KW-0677">Repeat</keyword>
<keyword id="KW-0964">Secreted</keyword>
<keyword id="KW-0732">Signal</keyword>
<gene>
    <name type="primary">Tnfrsf11b</name>
    <name type="synonym">Ocif</name>
    <name type="synonym">Opg</name>
</gene>
<feature type="signal peptide" evidence="1">
    <location>
        <begin position="1"/>
        <end position="21"/>
    </location>
</feature>
<feature type="chain" id="PRO_0000034588" description="Tumor necrosis factor receptor superfamily member 11B">
    <location>
        <begin position="22"/>
        <end position="401"/>
    </location>
</feature>
<feature type="repeat" description="TNFR-Cys 1">
    <location>
        <begin position="24"/>
        <end position="62"/>
    </location>
</feature>
<feature type="repeat" description="TNFR-Cys 2">
    <location>
        <begin position="65"/>
        <end position="105"/>
    </location>
</feature>
<feature type="repeat" description="TNFR-Cys 3">
    <location>
        <begin position="107"/>
        <end position="142"/>
    </location>
</feature>
<feature type="repeat" description="TNFR-Cys 4">
    <location>
        <begin position="145"/>
        <end position="185"/>
    </location>
</feature>
<feature type="domain" description="Death 1" evidence="3">
    <location>
        <begin position="198"/>
        <end position="269"/>
    </location>
</feature>
<feature type="domain" description="Death 2" evidence="3">
    <location>
        <begin position="283"/>
        <end position="365"/>
    </location>
</feature>
<feature type="site" description="Involved in dimerization" evidence="1">
    <location>
        <position position="400"/>
    </location>
</feature>
<feature type="glycosylation site" description="N-linked (GlcNAc...) asparagine" evidence="2">
    <location>
        <position position="98"/>
    </location>
</feature>
<feature type="glycosylation site" description="N-linked (GlcNAc...) asparagine" evidence="2">
    <location>
        <position position="165"/>
    </location>
</feature>
<feature type="glycosylation site" description="N-linked (GlcNAc...) asparagine" evidence="2">
    <location>
        <position position="178"/>
    </location>
</feature>
<feature type="glycosylation site" description="N-linked (GlcNAc...) asparagine" evidence="2">
    <location>
        <position position="289"/>
    </location>
</feature>
<feature type="disulfide bond" evidence="4 6">
    <location>
        <begin position="41"/>
        <end position="54"/>
    </location>
</feature>
<feature type="disulfide bond" evidence="4 6">
    <location>
        <begin position="44"/>
        <end position="62"/>
    </location>
</feature>
<feature type="disulfide bond" evidence="4 6">
    <location>
        <begin position="65"/>
        <end position="80"/>
    </location>
</feature>
<feature type="disulfide bond" evidence="4 6">
    <location>
        <begin position="83"/>
        <end position="97"/>
    </location>
</feature>
<feature type="disulfide bond" evidence="4 6">
    <location>
        <begin position="87"/>
        <end position="105"/>
    </location>
</feature>
<feature type="disulfide bond" evidence="4 6">
    <location>
        <begin position="107"/>
        <end position="118"/>
    </location>
</feature>
<feature type="disulfide bond" evidence="4 6">
    <location>
        <begin position="124"/>
        <end position="142"/>
    </location>
</feature>
<feature type="disulfide bond" evidence="4 6">
    <location>
        <begin position="145"/>
        <end position="160"/>
    </location>
</feature>
<feature type="disulfide bond" evidence="4 6">
    <location>
        <begin position="166"/>
        <end position="185"/>
    </location>
</feature>
<feature type="sequence variant" description="In strain: 129/Ola and NIH Swiss." evidence="7">
    <original>R</original>
    <variation>P</variation>
    <location>
        <position position="138"/>
    </location>
</feature>
<feature type="sequence variant" description="In strain: 129/Ola and NIH Swiss." evidence="7">
    <original>I</original>
    <variation>R</variation>
    <location>
        <position position="161"/>
    </location>
</feature>
<feature type="sequence variant" description="In strain: 129/Ola and NIH Swiss." evidence="7">
    <original>N</original>
    <variation>D</variation>
    <location>
        <position position="165"/>
    </location>
</feature>
<feature type="sequence variant" description="In strain: 129/Ola and NIH Swiss." evidence="7">
    <original>S</original>
    <variation>A</variation>
    <location>
        <position position="288"/>
    </location>
</feature>
<feature type="sequence variant" description="In strain: 129/Ola and NIH Swiss." evidence="7">
    <original>L</original>
    <variation>R</variation>
    <location>
        <position position="296"/>
    </location>
</feature>
<feature type="strand" evidence="8">
    <location>
        <begin position="35"/>
        <end position="37"/>
    </location>
</feature>
<feature type="strand" evidence="8">
    <location>
        <begin position="48"/>
        <end position="52"/>
    </location>
</feature>
<feature type="strand" evidence="8">
    <location>
        <begin position="56"/>
        <end position="58"/>
    </location>
</feature>
<feature type="strand" evidence="8">
    <location>
        <begin position="61"/>
        <end position="64"/>
    </location>
</feature>
<feature type="strand" evidence="8">
    <location>
        <begin position="91"/>
        <end position="95"/>
    </location>
</feature>
<feature type="strand" evidence="8">
    <location>
        <begin position="99"/>
        <end position="101"/>
    </location>
</feature>
<feature type="strand" evidence="8">
    <location>
        <begin position="104"/>
        <end position="107"/>
    </location>
</feature>
<feature type="strand" evidence="8">
    <location>
        <begin position="111"/>
        <end position="114"/>
    </location>
</feature>
<feature type="strand" evidence="8">
    <location>
        <begin position="117"/>
        <end position="120"/>
    </location>
</feature>
<feature type="strand" evidence="8">
    <location>
        <begin position="128"/>
        <end position="132"/>
    </location>
</feature>
<feature type="strand" evidence="8">
    <location>
        <begin position="141"/>
        <end position="144"/>
    </location>
</feature>
<feature type="strand" evidence="8">
    <location>
        <begin position="155"/>
        <end position="157"/>
    </location>
</feature>
<protein>
    <recommendedName>
        <fullName>Tumor necrosis factor receptor superfamily member 11B</fullName>
    </recommendedName>
    <alternativeName>
        <fullName>Osteoclastogenesis inhibitory factor</fullName>
    </alternativeName>
    <alternativeName>
        <fullName>Osteoprotegerin</fullName>
    </alternativeName>
</protein>
<name>TR11B_MOUSE</name>
<reference key="1">
    <citation type="journal article" date="1997" name="Cell">
        <title>Osteoprotegerin: a novel secreted protein involved in the regulation of bone density.</title>
        <authorList>
            <person name="Simonet W.S."/>
            <person name="Lacey D.L."/>
            <person name="Dunstan C.R."/>
            <person name="Kelley M."/>
            <person name="Chang M.-S."/>
            <person name="Luethy R."/>
            <person name="Nguyen H.Q."/>
            <person name="Wooden S."/>
            <person name="Bennett L."/>
            <person name="Boone T."/>
            <person name="Shimamoto G."/>
            <person name="Derose M."/>
            <person name="Elliott R."/>
            <person name="Colombero A."/>
            <person name="Tan H.-L."/>
            <person name="Trail G."/>
            <person name="Sullivan J."/>
            <person name="Davy E."/>
            <person name="Bucay N."/>
            <person name="Renshaw-Gegg L."/>
            <person name="Hughes T.M."/>
            <person name="Hill D."/>
            <person name="Pattison W."/>
            <person name="Campbell P."/>
            <person name="Sander S."/>
            <person name="Van G."/>
            <person name="Tarpley J."/>
            <person name="Derby P."/>
            <person name="Lee R."/>
            <person name="Suggs S."/>
            <person name="Boyle W.J."/>
        </authorList>
    </citation>
    <scope>NUCLEOTIDE SEQUENCE [MRNA]</scope>
    <source>
        <strain>BALB/cJ</strain>
        <tissue>Kidney</tissue>
    </source>
</reference>
<reference key="2">
    <citation type="journal article" date="1998" name="Gene">
        <title>Structure of the mouse osteoclastogenesis inhibitory factor (OCIF) gene and its expression in embryogenesis.</title>
        <authorList>
            <person name="Mizuno A."/>
            <person name="Murakami A."/>
            <person name="Nakagawa N."/>
            <person name="Yasuda H."/>
            <person name="Tsuda E."/>
            <person name="Morinaga T."/>
            <person name="Higashio K."/>
        </authorList>
    </citation>
    <scope>NUCLEOTIDE SEQUENCE [GENOMIC DNA / MRNA]</scope>
    <scope>VARIANTS PRO-138; ARG-161; ASP-165; ALA-288 AND ARG-296</scope>
    <source>
        <strain>129/Ola</strain>
        <strain>NIH Swiss</strain>
        <tissue>Fibroblast</tissue>
    </source>
</reference>
<reference key="3">
    <citation type="journal article" date="2000" name="J. Exp. Med.">
        <title>Osteoprotegerin reverses osteoporosis by inhibiting endosteal osteoclasts and prevents vascular calcification by blocking a process resembling osteoclastogenesis.</title>
        <authorList>
            <person name="Min H."/>
            <person name="Morony S."/>
            <person name="Sarosi I."/>
            <person name="Dunstan C.R."/>
            <person name="Capparelli C."/>
            <person name="Scully S."/>
            <person name="Van G."/>
            <person name="Kaufman S."/>
            <person name="Kostenuik P.J."/>
            <person name="Lacey D.L."/>
            <person name="Boyle W.J."/>
            <person name="Simonet W.S."/>
        </authorList>
    </citation>
    <scope>FUNCTION</scope>
</reference>
<reference key="4">
    <citation type="journal article" date="2012" name="Structure">
        <title>RANKL employs distinct binding modes to engage RANK and the osteoprotegerin decoy receptor.</title>
        <authorList>
            <person name="Nelson C.A."/>
            <person name="Warren J.T."/>
            <person name="Wang M.W."/>
            <person name="Teitelbaum S.L."/>
            <person name="Fremont D.H."/>
        </authorList>
    </citation>
    <scope>X-RAY CRYSTALLOGRAPHY (2.7 ANGSTROMS) OF 22-197 IN COMPLEX WITH TNFSF11/RANKL</scope>
    <scope>DISULFIDE BONDS</scope>
</reference>
<proteinExistence type="evidence at protein level"/>